<keyword id="KW-0929">Antimicrobial</keyword>
<keyword id="KW-1015">Disulfide bond</keyword>
<keyword id="KW-0295">Fungicide</keyword>
<keyword id="KW-0611">Plant defense</keyword>
<keyword id="KW-1185">Reference proteome</keyword>
<keyword id="KW-0964">Secreted</keyword>
<keyword id="KW-0732">Signal</keyword>
<comment type="subcellular location">
    <subcellularLocation>
        <location evidence="1">Secreted</location>
    </subcellularLocation>
</comment>
<comment type="similarity">
    <text evidence="3">Belongs to the DEFL family.</text>
</comment>
<comment type="caution">
    <text evidence="3">Lacks 1 of the 4 disulfide bonds, which are conserved features of the family.</text>
</comment>
<dbReference type="EMBL" id="AC009465">
    <property type="status" value="NOT_ANNOTATED_CDS"/>
    <property type="molecule type" value="Genomic_DNA"/>
</dbReference>
<dbReference type="EMBL" id="CP002686">
    <property type="protein sequence ID" value="AEE74154.1"/>
    <property type="molecule type" value="Genomic_DNA"/>
</dbReference>
<dbReference type="RefSeq" id="NP_001030636.1">
    <property type="nucleotide sequence ID" value="NM_001035559.1"/>
</dbReference>
<dbReference type="SMR" id="Q2V3Y5"/>
<dbReference type="PaxDb" id="3702-AT3G04903.1"/>
<dbReference type="EnsemblPlants" id="AT3G04903.1">
    <property type="protein sequence ID" value="AT3G04903.1"/>
    <property type="gene ID" value="AT3G04903"/>
</dbReference>
<dbReference type="GeneID" id="3768814"/>
<dbReference type="Gramene" id="AT3G04903.1">
    <property type="protein sequence ID" value="AT3G04903.1"/>
    <property type="gene ID" value="AT3G04903"/>
</dbReference>
<dbReference type="KEGG" id="ath:AT3G04903"/>
<dbReference type="Araport" id="AT3G04903"/>
<dbReference type="TAIR" id="AT3G04903"/>
<dbReference type="HOGENOM" id="CLU_2486387_0_0_1"/>
<dbReference type="InParanoid" id="Q2V3Y5"/>
<dbReference type="OMA" id="AENTHGW"/>
<dbReference type="PRO" id="PR:Q2V3Y5"/>
<dbReference type="Proteomes" id="UP000006548">
    <property type="component" value="Chromosome 3"/>
</dbReference>
<dbReference type="ExpressionAtlas" id="Q2V3Y5">
    <property type="expression patterns" value="baseline"/>
</dbReference>
<dbReference type="GO" id="GO:0005576">
    <property type="term" value="C:extracellular region"/>
    <property type="evidence" value="ECO:0007669"/>
    <property type="project" value="UniProtKB-SubCell"/>
</dbReference>
<dbReference type="GO" id="GO:0050832">
    <property type="term" value="P:defense response to fungus"/>
    <property type="evidence" value="ECO:0007669"/>
    <property type="project" value="UniProtKB-KW"/>
</dbReference>
<dbReference type="GO" id="GO:0031640">
    <property type="term" value="P:killing of cells of another organism"/>
    <property type="evidence" value="ECO:0007669"/>
    <property type="project" value="UniProtKB-KW"/>
</dbReference>
<accession>Q2V3Y5</accession>
<organism>
    <name type="scientific">Arabidopsis thaliana</name>
    <name type="common">Mouse-ear cress</name>
    <dbReference type="NCBI Taxonomy" id="3702"/>
    <lineage>
        <taxon>Eukaryota</taxon>
        <taxon>Viridiplantae</taxon>
        <taxon>Streptophyta</taxon>
        <taxon>Embryophyta</taxon>
        <taxon>Tracheophyta</taxon>
        <taxon>Spermatophyta</taxon>
        <taxon>Magnoliopsida</taxon>
        <taxon>eudicotyledons</taxon>
        <taxon>Gunneridae</taxon>
        <taxon>Pentapetalae</taxon>
        <taxon>rosids</taxon>
        <taxon>malvids</taxon>
        <taxon>Brassicales</taxon>
        <taxon>Brassicaceae</taxon>
        <taxon>Camelineae</taxon>
        <taxon>Arabidopsis</taxon>
    </lineage>
</organism>
<name>DF317_ARATH</name>
<sequence length="87" mass="9848">MKSFLVAFLIVLVFFCVEMKIGNGFKIHEVPEPTGKWCGYSVPMKPCINDDRVKRCIAENTHGWLMATGMCTSIPSLKDCYCMHQCP</sequence>
<reference key="1">
    <citation type="journal article" date="2000" name="Nature">
        <title>Sequence and analysis of chromosome 3 of the plant Arabidopsis thaliana.</title>
        <authorList>
            <person name="Salanoubat M."/>
            <person name="Lemcke K."/>
            <person name="Rieger M."/>
            <person name="Ansorge W."/>
            <person name="Unseld M."/>
            <person name="Fartmann B."/>
            <person name="Valle G."/>
            <person name="Bloecker H."/>
            <person name="Perez-Alonso M."/>
            <person name="Obermaier B."/>
            <person name="Delseny M."/>
            <person name="Boutry M."/>
            <person name="Grivell L.A."/>
            <person name="Mache R."/>
            <person name="Puigdomenech P."/>
            <person name="De Simone V."/>
            <person name="Choisne N."/>
            <person name="Artiguenave F."/>
            <person name="Robert C."/>
            <person name="Brottier P."/>
            <person name="Wincker P."/>
            <person name="Cattolico L."/>
            <person name="Weissenbach J."/>
            <person name="Saurin W."/>
            <person name="Quetier F."/>
            <person name="Schaefer M."/>
            <person name="Mueller-Auer S."/>
            <person name="Gabel C."/>
            <person name="Fuchs M."/>
            <person name="Benes V."/>
            <person name="Wurmbach E."/>
            <person name="Drzonek H."/>
            <person name="Erfle H."/>
            <person name="Jordan N."/>
            <person name="Bangert S."/>
            <person name="Wiedelmann R."/>
            <person name="Kranz H."/>
            <person name="Voss H."/>
            <person name="Holland R."/>
            <person name="Brandt P."/>
            <person name="Nyakatura G."/>
            <person name="Vezzi A."/>
            <person name="D'Angelo M."/>
            <person name="Pallavicini A."/>
            <person name="Toppo S."/>
            <person name="Simionati B."/>
            <person name="Conrad A."/>
            <person name="Hornischer K."/>
            <person name="Kauer G."/>
            <person name="Loehnert T.-H."/>
            <person name="Nordsiek G."/>
            <person name="Reichelt J."/>
            <person name="Scharfe M."/>
            <person name="Schoen O."/>
            <person name="Bargues M."/>
            <person name="Terol J."/>
            <person name="Climent J."/>
            <person name="Navarro P."/>
            <person name="Collado C."/>
            <person name="Perez-Perez A."/>
            <person name="Ottenwaelder B."/>
            <person name="Duchemin D."/>
            <person name="Cooke R."/>
            <person name="Laudie M."/>
            <person name="Berger-Llauro C."/>
            <person name="Purnelle B."/>
            <person name="Masuy D."/>
            <person name="de Haan M."/>
            <person name="Maarse A.C."/>
            <person name="Alcaraz J.-P."/>
            <person name="Cottet A."/>
            <person name="Casacuberta E."/>
            <person name="Monfort A."/>
            <person name="Argiriou A."/>
            <person name="Flores M."/>
            <person name="Liguori R."/>
            <person name="Vitale D."/>
            <person name="Mannhaupt G."/>
            <person name="Haase D."/>
            <person name="Schoof H."/>
            <person name="Rudd S."/>
            <person name="Zaccaria P."/>
            <person name="Mewes H.-W."/>
            <person name="Mayer K.F.X."/>
            <person name="Kaul S."/>
            <person name="Town C.D."/>
            <person name="Koo H.L."/>
            <person name="Tallon L.J."/>
            <person name="Jenkins J."/>
            <person name="Rooney T."/>
            <person name="Rizzo M."/>
            <person name="Walts A."/>
            <person name="Utterback T."/>
            <person name="Fujii C.Y."/>
            <person name="Shea T.P."/>
            <person name="Creasy T.H."/>
            <person name="Haas B."/>
            <person name="Maiti R."/>
            <person name="Wu D."/>
            <person name="Peterson J."/>
            <person name="Van Aken S."/>
            <person name="Pai G."/>
            <person name="Militscher J."/>
            <person name="Sellers P."/>
            <person name="Gill J.E."/>
            <person name="Feldblyum T.V."/>
            <person name="Preuss D."/>
            <person name="Lin X."/>
            <person name="Nierman W.C."/>
            <person name="Salzberg S.L."/>
            <person name="White O."/>
            <person name="Venter J.C."/>
            <person name="Fraser C.M."/>
            <person name="Kaneko T."/>
            <person name="Nakamura Y."/>
            <person name="Sato S."/>
            <person name="Kato T."/>
            <person name="Asamizu E."/>
            <person name="Sasamoto S."/>
            <person name="Kimura T."/>
            <person name="Idesawa K."/>
            <person name="Kawashima K."/>
            <person name="Kishida Y."/>
            <person name="Kiyokawa C."/>
            <person name="Kohara M."/>
            <person name="Matsumoto M."/>
            <person name="Matsuno A."/>
            <person name="Muraki A."/>
            <person name="Nakayama S."/>
            <person name="Nakazaki N."/>
            <person name="Shinpo S."/>
            <person name="Takeuchi C."/>
            <person name="Wada T."/>
            <person name="Watanabe A."/>
            <person name="Yamada M."/>
            <person name="Yasuda M."/>
            <person name="Tabata S."/>
        </authorList>
    </citation>
    <scope>NUCLEOTIDE SEQUENCE [LARGE SCALE GENOMIC DNA]</scope>
    <source>
        <strain>cv. Columbia</strain>
    </source>
</reference>
<reference key="2">
    <citation type="journal article" date="2017" name="Plant J.">
        <title>Araport11: a complete reannotation of the Arabidopsis thaliana reference genome.</title>
        <authorList>
            <person name="Cheng C.Y."/>
            <person name="Krishnakumar V."/>
            <person name="Chan A.P."/>
            <person name="Thibaud-Nissen F."/>
            <person name="Schobel S."/>
            <person name="Town C.D."/>
        </authorList>
    </citation>
    <scope>GENOME REANNOTATION</scope>
    <source>
        <strain>cv. Columbia</strain>
    </source>
</reference>
<reference key="3">
    <citation type="journal article" date="2005" name="Plant Physiol.">
        <title>Genome organization of more than 300 defensin-like genes in Arabidopsis.</title>
        <authorList>
            <person name="Silverstein K.A.T."/>
            <person name="Graham M.A."/>
            <person name="Paape T.D."/>
            <person name="VandenBosch K.A."/>
        </authorList>
    </citation>
    <scope>GENE FAMILY</scope>
</reference>
<proteinExistence type="inferred from homology"/>
<feature type="signal peptide" evidence="2">
    <location>
        <begin position="1"/>
        <end position="24"/>
    </location>
</feature>
<feature type="chain" id="PRO_0000379772" description="Putative defensin-like protein 317">
    <location>
        <begin position="25"/>
        <end position="87"/>
    </location>
</feature>
<feature type="disulfide bond" evidence="1">
    <location>
        <begin position="38"/>
        <end position="71"/>
    </location>
</feature>
<feature type="disulfide bond" evidence="1">
    <location>
        <begin position="47"/>
        <end position="80"/>
    </location>
</feature>
<feature type="disulfide bond" evidence="1">
    <location>
        <begin position="56"/>
        <end position="82"/>
    </location>
</feature>
<gene>
    <name type="ordered locus">At3g04903</name>
    <name type="ORF">T9J14</name>
</gene>
<evidence type="ECO:0000250" key="1"/>
<evidence type="ECO:0000255" key="2"/>
<evidence type="ECO:0000305" key="3"/>
<protein>
    <recommendedName>
        <fullName>Putative defensin-like protein 317</fullName>
    </recommendedName>
</protein>